<sequence length="66" mass="7783">MAKKNASLLVKLVSTAIKITKTGEEKSTGYFYVKKRNPKKLTKKLEFRKYDPVVRRHVLFKEEKLK</sequence>
<dbReference type="EMBL" id="AE017196">
    <property type="protein sequence ID" value="AAS14601.1"/>
    <property type="molecule type" value="Genomic_DNA"/>
</dbReference>
<dbReference type="RefSeq" id="WP_010082633.1">
    <property type="nucleotide sequence ID" value="NZ_OX384529.1"/>
</dbReference>
<dbReference type="SMR" id="Q73GL5"/>
<dbReference type="EnsemblBacteria" id="AAS14601">
    <property type="protein sequence ID" value="AAS14601"/>
    <property type="gene ID" value="WD_0930"/>
</dbReference>
<dbReference type="GeneID" id="70036401"/>
<dbReference type="KEGG" id="wol:WD_0930"/>
<dbReference type="eggNOG" id="COG0267">
    <property type="taxonomic scope" value="Bacteria"/>
</dbReference>
<dbReference type="Proteomes" id="UP000008215">
    <property type="component" value="Chromosome"/>
</dbReference>
<dbReference type="GO" id="GO:0005737">
    <property type="term" value="C:cytoplasm"/>
    <property type="evidence" value="ECO:0007669"/>
    <property type="project" value="UniProtKB-ARBA"/>
</dbReference>
<dbReference type="GO" id="GO:0015934">
    <property type="term" value="C:large ribosomal subunit"/>
    <property type="evidence" value="ECO:0007669"/>
    <property type="project" value="TreeGrafter"/>
</dbReference>
<dbReference type="GO" id="GO:0003735">
    <property type="term" value="F:structural constituent of ribosome"/>
    <property type="evidence" value="ECO:0007669"/>
    <property type="project" value="InterPro"/>
</dbReference>
<dbReference type="GO" id="GO:0006412">
    <property type="term" value="P:translation"/>
    <property type="evidence" value="ECO:0007669"/>
    <property type="project" value="UniProtKB-UniRule"/>
</dbReference>
<dbReference type="Gene3D" id="2.20.28.120">
    <property type="entry name" value="Ribosomal protein L33"/>
    <property type="match status" value="1"/>
</dbReference>
<dbReference type="HAMAP" id="MF_00294">
    <property type="entry name" value="Ribosomal_bL33"/>
    <property type="match status" value="1"/>
</dbReference>
<dbReference type="InterPro" id="IPR001705">
    <property type="entry name" value="Ribosomal_bL33"/>
</dbReference>
<dbReference type="InterPro" id="IPR018264">
    <property type="entry name" value="Ribosomal_bL33_CS"/>
</dbReference>
<dbReference type="InterPro" id="IPR038584">
    <property type="entry name" value="Ribosomal_bL33_sf"/>
</dbReference>
<dbReference type="InterPro" id="IPR011332">
    <property type="entry name" value="Ribosomal_zn-bd"/>
</dbReference>
<dbReference type="NCBIfam" id="NF001860">
    <property type="entry name" value="PRK00595.1"/>
    <property type="match status" value="1"/>
</dbReference>
<dbReference type="NCBIfam" id="TIGR01023">
    <property type="entry name" value="rpmG_bact"/>
    <property type="match status" value="1"/>
</dbReference>
<dbReference type="PANTHER" id="PTHR15238">
    <property type="entry name" value="54S RIBOSOMAL PROTEIN L39, MITOCHONDRIAL"/>
    <property type="match status" value="1"/>
</dbReference>
<dbReference type="PANTHER" id="PTHR15238:SF1">
    <property type="entry name" value="LARGE RIBOSOMAL SUBUNIT PROTEIN BL33M"/>
    <property type="match status" value="1"/>
</dbReference>
<dbReference type="Pfam" id="PF00471">
    <property type="entry name" value="Ribosomal_L33"/>
    <property type="match status" value="1"/>
</dbReference>
<dbReference type="SUPFAM" id="SSF57829">
    <property type="entry name" value="Zn-binding ribosomal proteins"/>
    <property type="match status" value="1"/>
</dbReference>
<dbReference type="PROSITE" id="PS00582">
    <property type="entry name" value="RIBOSOMAL_L33"/>
    <property type="match status" value="1"/>
</dbReference>
<name>RL33_WOLPM</name>
<protein>
    <recommendedName>
        <fullName evidence="1">Large ribosomal subunit protein bL33</fullName>
    </recommendedName>
    <alternativeName>
        <fullName evidence="2">50S ribosomal protein L33</fullName>
    </alternativeName>
</protein>
<accession>Q73GL5</accession>
<proteinExistence type="inferred from homology"/>
<feature type="chain" id="PRO_1000004212" description="Large ribosomal subunit protein bL33">
    <location>
        <begin position="1"/>
        <end position="66"/>
    </location>
</feature>
<keyword id="KW-0687">Ribonucleoprotein</keyword>
<keyword id="KW-0689">Ribosomal protein</keyword>
<evidence type="ECO:0000255" key="1">
    <source>
        <dbReference type="HAMAP-Rule" id="MF_00294"/>
    </source>
</evidence>
<evidence type="ECO:0000305" key="2"/>
<comment type="similarity">
    <text evidence="1">Belongs to the bacterial ribosomal protein bL33 family.</text>
</comment>
<reference key="1">
    <citation type="journal article" date="2004" name="PLoS Biol.">
        <title>Phylogenomics of the reproductive parasite Wolbachia pipientis wMel: a streamlined genome overrun by mobile genetic elements.</title>
        <authorList>
            <person name="Wu M."/>
            <person name="Sun L.V."/>
            <person name="Vamathevan J.J."/>
            <person name="Riegler M."/>
            <person name="DeBoy R.T."/>
            <person name="Brownlie J.C."/>
            <person name="McGraw E.A."/>
            <person name="Martin W."/>
            <person name="Esser C."/>
            <person name="Ahmadinejad N."/>
            <person name="Wiegand C."/>
            <person name="Madupu R."/>
            <person name="Beanan M.J."/>
            <person name="Brinkac L.M."/>
            <person name="Daugherty S.C."/>
            <person name="Durkin A.S."/>
            <person name="Kolonay J.F."/>
            <person name="Nelson W.C."/>
            <person name="Mohamoud Y."/>
            <person name="Lee P."/>
            <person name="Berry K.J."/>
            <person name="Young M.B."/>
            <person name="Utterback T.R."/>
            <person name="Weidman J.F."/>
            <person name="Nierman W.C."/>
            <person name="Paulsen I.T."/>
            <person name="Nelson K.E."/>
            <person name="Tettelin H."/>
            <person name="O'Neill S.L."/>
            <person name="Eisen J.A."/>
        </authorList>
    </citation>
    <scope>NUCLEOTIDE SEQUENCE [LARGE SCALE GENOMIC DNA]</scope>
</reference>
<organism>
    <name type="scientific">Wolbachia pipientis wMel</name>
    <dbReference type="NCBI Taxonomy" id="163164"/>
    <lineage>
        <taxon>Bacteria</taxon>
        <taxon>Pseudomonadati</taxon>
        <taxon>Pseudomonadota</taxon>
        <taxon>Alphaproteobacteria</taxon>
        <taxon>Rickettsiales</taxon>
        <taxon>Anaplasmataceae</taxon>
        <taxon>Wolbachieae</taxon>
        <taxon>Wolbachia</taxon>
    </lineage>
</organism>
<gene>
    <name evidence="1" type="primary">rpmG</name>
    <name type="ordered locus">WD_0930</name>
</gene>